<accession>Q0VP38</accession>
<gene>
    <name evidence="1" type="primary">rnfD</name>
    <name type="ordered locus">ABO_1612</name>
</gene>
<protein>
    <recommendedName>
        <fullName evidence="1">Ion-translocating oxidoreductase complex subunit D</fullName>
        <ecNumber evidence="1">7.-.-.-</ecNumber>
    </recommendedName>
    <alternativeName>
        <fullName evidence="1">Rnf electron transport complex subunit D</fullName>
    </alternativeName>
</protein>
<comment type="function">
    <text evidence="1">Part of a membrane-bound complex that couples electron transfer with translocation of ions across the membrane.</text>
</comment>
<comment type="cofactor">
    <cofactor evidence="1">
        <name>FMN</name>
        <dbReference type="ChEBI" id="CHEBI:58210"/>
    </cofactor>
</comment>
<comment type="subunit">
    <text evidence="1">The complex is composed of six subunits: RnfA, RnfB, RnfC, RnfD, RnfE and RnfG.</text>
</comment>
<comment type="subcellular location">
    <subcellularLocation>
        <location evidence="1">Cell inner membrane</location>
        <topology evidence="1">Multi-pass membrane protein</topology>
    </subcellularLocation>
</comment>
<comment type="similarity">
    <text evidence="1">Belongs to the NqrB/RnfD family.</text>
</comment>
<organism>
    <name type="scientific">Alcanivorax borkumensis (strain ATCC 700651 / DSM 11573 / NCIMB 13689 / SK2)</name>
    <dbReference type="NCBI Taxonomy" id="393595"/>
    <lineage>
        <taxon>Bacteria</taxon>
        <taxon>Pseudomonadati</taxon>
        <taxon>Pseudomonadota</taxon>
        <taxon>Gammaproteobacteria</taxon>
        <taxon>Oceanospirillales</taxon>
        <taxon>Alcanivoracaceae</taxon>
        <taxon>Alcanivorax</taxon>
    </lineage>
</organism>
<proteinExistence type="inferred from homology"/>
<reference key="1">
    <citation type="journal article" date="2006" name="Nat. Biotechnol.">
        <title>Genome sequence of the ubiquitous hydrocarbon-degrading marine bacterium Alcanivorax borkumensis.</title>
        <authorList>
            <person name="Schneiker S."/>
            <person name="Martins dos Santos V.A.P."/>
            <person name="Bartels D."/>
            <person name="Bekel T."/>
            <person name="Brecht M."/>
            <person name="Buhrmester J."/>
            <person name="Chernikova T.N."/>
            <person name="Denaro R."/>
            <person name="Ferrer M."/>
            <person name="Gertler C."/>
            <person name="Goesmann A."/>
            <person name="Golyshina O.V."/>
            <person name="Kaminski F."/>
            <person name="Khachane A.N."/>
            <person name="Lang S."/>
            <person name="Linke B."/>
            <person name="McHardy A.C."/>
            <person name="Meyer F."/>
            <person name="Nechitaylo T."/>
            <person name="Puehler A."/>
            <person name="Regenhardt D."/>
            <person name="Rupp O."/>
            <person name="Sabirova J.S."/>
            <person name="Selbitschka W."/>
            <person name="Yakimov M.M."/>
            <person name="Timmis K.N."/>
            <person name="Vorhoelter F.-J."/>
            <person name="Weidner S."/>
            <person name="Kaiser O."/>
            <person name="Golyshin P.N."/>
        </authorList>
    </citation>
    <scope>NUCLEOTIDE SEQUENCE [LARGE SCALE GENOMIC DNA]</scope>
    <source>
        <strain>ATCC 700651 / DSM 11573 / NCIMB 13689 / SK2</strain>
    </source>
</reference>
<dbReference type="EC" id="7.-.-.-" evidence="1"/>
<dbReference type="EMBL" id="AM286690">
    <property type="protein sequence ID" value="CAL17060.1"/>
    <property type="molecule type" value="Genomic_DNA"/>
</dbReference>
<dbReference type="SMR" id="Q0VP38"/>
<dbReference type="STRING" id="393595.ABO_1612"/>
<dbReference type="KEGG" id="abo:ABO_1612"/>
<dbReference type="eggNOG" id="COG4658">
    <property type="taxonomic scope" value="Bacteria"/>
</dbReference>
<dbReference type="HOGENOM" id="CLU_042020_0_0_6"/>
<dbReference type="OrthoDB" id="9776359at2"/>
<dbReference type="Proteomes" id="UP000008871">
    <property type="component" value="Chromosome"/>
</dbReference>
<dbReference type="GO" id="GO:0005886">
    <property type="term" value="C:plasma membrane"/>
    <property type="evidence" value="ECO:0007669"/>
    <property type="project" value="UniProtKB-SubCell"/>
</dbReference>
<dbReference type="GO" id="GO:0022900">
    <property type="term" value="P:electron transport chain"/>
    <property type="evidence" value="ECO:0007669"/>
    <property type="project" value="UniProtKB-UniRule"/>
</dbReference>
<dbReference type="GO" id="GO:0055085">
    <property type="term" value="P:transmembrane transport"/>
    <property type="evidence" value="ECO:0007669"/>
    <property type="project" value="InterPro"/>
</dbReference>
<dbReference type="HAMAP" id="MF_00462">
    <property type="entry name" value="RsxD_RnfD"/>
    <property type="match status" value="1"/>
</dbReference>
<dbReference type="InterPro" id="IPR004338">
    <property type="entry name" value="NqrB/RnfD"/>
</dbReference>
<dbReference type="InterPro" id="IPR011303">
    <property type="entry name" value="RnfD_bac"/>
</dbReference>
<dbReference type="NCBIfam" id="NF002011">
    <property type="entry name" value="PRK00816.1"/>
    <property type="match status" value="1"/>
</dbReference>
<dbReference type="NCBIfam" id="TIGR01946">
    <property type="entry name" value="rnfD"/>
    <property type="match status" value="1"/>
</dbReference>
<dbReference type="PANTHER" id="PTHR30578">
    <property type="entry name" value="ELECTRON TRANSPORT COMPLEX PROTEIN RNFD"/>
    <property type="match status" value="1"/>
</dbReference>
<dbReference type="PANTHER" id="PTHR30578:SF0">
    <property type="entry name" value="ION-TRANSLOCATING OXIDOREDUCTASE COMPLEX SUBUNIT D"/>
    <property type="match status" value="1"/>
</dbReference>
<dbReference type="Pfam" id="PF03116">
    <property type="entry name" value="NQR2_RnfD_RnfE"/>
    <property type="match status" value="1"/>
</dbReference>
<feature type="chain" id="PRO_1000081144" description="Ion-translocating oxidoreductase complex subunit D">
    <location>
        <begin position="1"/>
        <end position="342"/>
    </location>
</feature>
<feature type="transmembrane region" description="Helical" evidence="1">
    <location>
        <begin position="42"/>
        <end position="62"/>
    </location>
</feature>
<feature type="transmembrane region" description="Helical" evidence="1">
    <location>
        <begin position="68"/>
        <end position="90"/>
    </location>
</feature>
<feature type="transmembrane region" description="Helical" evidence="1">
    <location>
        <begin position="124"/>
        <end position="144"/>
    </location>
</feature>
<feature type="transmembrane region" description="Helical" evidence="1">
    <location>
        <begin position="200"/>
        <end position="220"/>
    </location>
</feature>
<feature type="transmembrane region" description="Helical" evidence="1">
    <location>
        <begin position="227"/>
        <end position="247"/>
    </location>
</feature>
<feature type="transmembrane region" description="Helical" evidence="1">
    <location>
        <begin position="252"/>
        <end position="272"/>
    </location>
</feature>
<feature type="transmembrane region" description="Helical" evidence="1">
    <location>
        <begin position="286"/>
        <end position="306"/>
    </location>
</feature>
<feature type="transmembrane region" description="Helical" evidence="1">
    <location>
        <begin position="308"/>
        <end position="328"/>
    </location>
</feature>
<feature type="modified residue" description="FMN phosphoryl threonine" evidence="1">
    <location>
        <position position="171"/>
    </location>
</feature>
<name>RNFD_ALCBS</name>
<sequence length="342" mass="36884">MSLITSTSPHATVKNNTGAFMRQVIYATLPGLAVLTWQFGWGSVINVLWAVIVALVSEALFLKARGRNIAFYLKDYSAVVTAVLLGLALPPTAPWWLTLVGVSFAIIVAKQLYGGLGMNPFNPAMVGYVLLLISFPVAMTQWLAPGEPLSLLQSWQLFTGQLPVDGLSGATPLDTFRTVHSAGASSEIELASHSILHGQFAGLGWEWVNLAFLLGGLYLISRKIITWHIPAGFLAGLGLPALLAWLIDPVRFADPLFQLFSGGAMLGAFFIATDPVSAATSRMGRLVYALLIGVLIWVIRTFGGYPDAVAFSVLLLNLSAPFIDYYTQPRTYGHKSSNRGTN</sequence>
<evidence type="ECO:0000255" key="1">
    <source>
        <dbReference type="HAMAP-Rule" id="MF_00462"/>
    </source>
</evidence>
<keyword id="KW-0997">Cell inner membrane</keyword>
<keyword id="KW-1003">Cell membrane</keyword>
<keyword id="KW-0249">Electron transport</keyword>
<keyword id="KW-0285">Flavoprotein</keyword>
<keyword id="KW-0288">FMN</keyword>
<keyword id="KW-0472">Membrane</keyword>
<keyword id="KW-0597">Phosphoprotein</keyword>
<keyword id="KW-1185">Reference proteome</keyword>
<keyword id="KW-1278">Translocase</keyword>
<keyword id="KW-0812">Transmembrane</keyword>
<keyword id="KW-1133">Transmembrane helix</keyword>
<keyword id="KW-0813">Transport</keyword>